<gene>
    <name type="primary">efr3</name>
    <name type="ORF">AN2496</name>
</gene>
<protein>
    <recommendedName>
        <fullName>Protein efr3</fullName>
    </recommendedName>
</protein>
<proteinExistence type="inferred from homology"/>
<feature type="chain" id="PRO_0000270778" description="Protein efr3">
    <location>
        <begin position="1"/>
        <end position="1156"/>
    </location>
</feature>
<feature type="region of interest" description="Disordered" evidence="1">
    <location>
        <begin position="412"/>
        <end position="431"/>
    </location>
</feature>
<feature type="region of interest" description="Disordered" evidence="1">
    <location>
        <begin position="786"/>
        <end position="805"/>
    </location>
</feature>
<feature type="region of interest" description="Disordered" evidence="1">
    <location>
        <begin position="840"/>
        <end position="990"/>
    </location>
</feature>
<feature type="region of interest" description="Disordered" evidence="1">
    <location>
        <begin position="1020"/>
        <end position="1057"/>
    </location>
</feature>
<feature type="region of interest" description="Disordered" evidence="1">
    <location>
        <begin position="1125"/>
        <end position="1156"/>
    </location>
</feature>
<feature type="compositionally biased region" description="Polar residues" evidence="1">
    <location>
        <begin position="869"/>
        <end position="894"/>
    </location>
</feature>
<feature type="compositionally biased region" description="Basic and acidic residues" evidence="1">
    <location>
        <begin position="908"/>
        <end position="921"/>
    </location>
</feature>
<feature type="compositionally biased region" description="Low complexity" evidence="1">
    <location>
        <begin position="944"/>
        <end position="964"/>
    </location>
</feature>
<feature type="compositionally biased region" description="Low complexity" evidence="1">
    <location>
        <begin position="1022"/>
        <end position="1031"/>
    </location>
</feature>
<feature type="compositionally biased region" description="Polar residues" evidence="1">
    <location>
        <begin position="1032"/>
        <end position="1055"/>
    </location>
</feature>
<feature type="compositionally biased region" description="Polar residues" evidence="1">
    <location>
        <begin position="1125"/>
        <end position="1145"/>
    </location>
</feature>
<comment type="similarity">
    <text evidence="2">Belongs to the EFR3 family.</text>
</comment>
<name>EFR3_EMENI</name>
<sequence>MPMETVRQTCRPKHQILVLKCYPQYQKGVQEVKPNSSELSYLLYYVSTRRSKLPKVSAFLEKRAARDVWRRKIGNVQVTLQILSALIEKVPRDLPIFARSVLTIIETVLRSRDISMVEDSIATFETFCRHQDMAALSAEQDFANQYRDVIQIYAGFAHEEQQHPSKISSLPQTIRWKNAGLRAIKGAVSSEAGLAADGGDLLRIILPVIMENLYNGEDSFIESLEHKLHEAERNVPDPASRRRYSAVTVQTVDTAEGDPALAAQNIADVDRKAELDMRLLALRCLDQVIVNGSSRGQIRLTTRLVLDFILRKGQSNNTYLSLDTDENNWATSLIEVVAKWCPVQARFIISSAAMEVLFEIPPKEDTLDEAFTVIYIIDYLLKSSVNMIGLSVIDVLLGLMRYMAMLVSPASAKGTDEQPDSSEKPGYDDGTNLSQKKKDLLVLLQKCIGDLTTHIYYGDQVVDMLRAILTRIKPPHGQDQVSAVIPEQLDGHLSEANPTSFFSTSAKVCALRAIKNILLVANSQRPMTSAGVESRNPVGIHVWEGTHWLLQDPQKEVRYAYVDALLYWLKLETNKNDLKLKDRSTTTALISARRDFSNTSERAAKRATGTHHREKALVVAQSNFLRLLHLTIYDVALQSSTQEKEIRILHLLLASLVENLGINAARFGLPMILKLQDDMTTLENSNTQAAKVNIGSLVHGYLWVLSETFGLDTHRAGQEIYTEIEKRKSRSIWLDSIGFSLESFESIIKDDRHALSHNTRETDKMTLFKDGVEEFVRRIEESYNRTVPAHDPPTSPGRNLGKPVIGGYLPPANQQLSDLLPPVVREQMLSPWSKQSALEAAEREKAEALSLNGSRTGTLPVRGHAHANGTGSSISTNSPSTAHVATAGLQTSRRMSMPDKTVTPNHNSSRDSPVRVNELRRVLSVQAPDRDRRLSPLRGRLDASNGSIISSSSESMVSGFSNSEFEGDGGSILLPTRDGQEPLDGDGMETPRPLSNGNNYGYLQTAFRASSSSIPPVPPIPHGISIPGGFPNDSQRSLPTPDRPSTASSRKQSLINGKFGIAAPADDKTLHRQKSRTGVGLVNGAEVPEVAINGKSTGTHSYGLQEVEETSQRRDVQKLLEGVLSSSEPASTLQPRVASNYSGRRSVTGGIGRPPY</sequence>
<evidence type="ECO:0000256" key="1">
    <source>
        <dbReference type="SAM" id="MobiDB-lite"/>
    </source>
</evidence>
<evidence type="ECO:0000305" key="2"/>
<accession>Q5BAD4</accession>
<accession>C8VPH3</accession>
<dbReference type="EMBL" id="AACD01000042">
    <property type="protein sequence ID" value="EAA63981.1"/>
    <property type="molecule type" value="Genomic_DNA"/>
</dbReference>
<dbReference type="EMBL" id="BN001307">
    <property type="protein sequence ID" value="CBF86970.1"/>
    <property type="molecule type" value="Genomic_DNA"/>
</dbReference>
<dbReference type="RefSeq" id="XP_660100.1">
    <property type="nucleotide sequence ID" value="XM_655008.1"/>
</dbReference>
<dbReference type="STRING" id="227321.Q5BAD4"/>
<dbReference type="EnsemblFungi" id="CBF86970">
    <property type="protein sequence ID" value="CBF86970"/>
    <property type="gene ID" value="ANIA_02496"/>
</dbReference>
<dbReference type="KEGG" id="ani:ANIA_02496"/>
<dbReference type="VEuPathDB" id="FungiDB:AN2496"/>
<dbReference type="eggNOG" id="KOG1877">
    <property type="taxonomic scope" value="Eukaryota"/>
</dbReference>
<dbReference type="HOGENOM" id="CLU_003271_0_0_1"/>
<dbReference type="InParanoid" id="Q5BAD4"/>
<dbReference type="OMA" id="ATHVYYT"/>
<dbReference type="OrthoDB" id="19232at2759"/>
<dbReference type="Proteomes" id="UP000000560">
    <property type="component" value="Chromosome VII"/>
</dbReference>
<dbReference type="GO" id="GO:0005886">
    <property type="term" value="C:plasma membrane"/>
    <property type="evidence" value="ECO:0000318"/>
    <property type="project" value="GO_Central"/>
</dbReference>
<dbReference type="GO" id="GO:0072659">
    <property type="term" value="P:protein localization to plasma membrane"/>
    <property type="evidence" value="ECO:0000318"/>
    <property type="project" value="GO_Central"/>
</dbReference>
<dbReference type="InterPro" id="IPR016024">
    <property type="entry name" value="ARM-type_fold"/>
</dbReference>
<dbReference type="InterPro" id="IPR039786">
    <property type="entry name" value="EFR3"/>
</dbReference>
<dbReference type="InterPro" id="IPR049150">
    <property type="entry name" value="EFR3_HEAT-like_rpt"/>
</dbReference>
<dbReference type="PANTHER" id="PTHR47766">
    <property type="entry name" value="PROTEIN EFR3"/>
    <property type="match status" value="1"/>
</dbReference>
<dbReference type="PANTHER" id="PTHR47766:SF1">
    <property type="entry name" value="PROTEIN EFR3"/>
    <property type="match status" value="1"/>
</dbReference>
<dbReference type="Pfam" id="PF21072">
    <property type="entry name" value="EFR3"/>
    <property type="match status" value="1"/>
</dbReference>
<dbReference type="SUPFAM" id="SSF48371">
    <property type="entry name" value="ARM repeat"/>
    <property type="match status" value="1"/>
</dbReference>
<reference key="1">
    <citation type="journal article" date="2005" name="Nature">
        <title>Sequencing of Aspergillus nidulans and comparative analysis with A. fumigatus and A. oryzae.</title>
        <authorList>
            <person name="Galagan J.E."/>
            <person name="Calvo S.E."/>
            <person name="Cuomo C."/>
            <person name="Ma L.-J."/>
            <person name="Wortman J.R."/>
            <person name="Batzoglou S."/>
            <person name="Lee S.-I."/>
            <person name="Bastuerkmen M."/>
            <person name="Spevak C.C."/>
            <person name="Clutterbuck J."/>
            <person name="Kapitonov V."/>
            <person name="Jurka J."/>
            <person name="Scazzocchio C."/>
            <person name="Farman M.L."/>
            <person name="Butler J."/>
            <person name="Purcell S."/>
            <person name="Harris S."/>
            <person name="Braus G.H."/>
            <person name="Draht O."/>
            <person name="Busch S."/>
            <person name="D'Enfert C."/>
            <person name="Bouchier C."/>
            <person name="Goldman G.H."/>
            <person name="Bell-Pedersen D."/>
            <person name="Griffiths-Jones S."/>
            <person name="Doonan J.H."/>
            <person name="Yu J."/>
            <person name="Vienken K."/>
            <person name="Pain A."/>
            <person name="Freitag M."/>
            <person name="Selker E.U."/>
            <person name="Archer D.B."/>
            <person name="Penalva M.A."/>
            <person name="Oakley B.R."/>
            <person name="Momany M."/>
            <person name="Tanaka T."/>
            <person name="Kumagai T."/>
            <person name="Asai K."/>
            <person name="Machida M."/>
            <person name="Nierman W.C."/>
            <person name="Denning D.W."/>
            <person name="Caddick M.X."/>
            <person name="Hynes M."/>
            <person name="Paoletti M."/>
            <person name="Fischer R."/>
            <person name="Miller B.L."/>
            <person name="Dyer P.S."/>
            <person name="Sachs M.S."/>
            <person name="Osmani S.A."/>
            <person name="Birren B.W."/>
        </authorList>
    </citation>
    <scope>NUCLEOTIDE SEQUENCE [LARGE SCALE GENOMIC DNA]</scope>
    <source>
        <strain>FGSC A4 / ATCC 38163 / CBS 112.46 / NRRL 194 / M139</strain>
    </source>
</reference>
<reference key="2">
    <citation type="journal article" date="2009" name="Fungal Genet. Biol.">
        <title>The 2008 update of the Aspergillus nidulans genome annotation: a community effort.</title>
        <authorList>
            <person name="Wortman J.R."/>
            <person name="Gilsenan J.M."/>
            <person name="Joardar V."/>
            <person name="Deegan J."/>
            <person name="Clutterbuck J."/>
            <person name="Andersen M.R."/>
            <person name="Archer D."/>
            <person name="Bencina M."/>
            <person name="Braus G."/>
            <person name="Coutinho P."/>
            <person name="von Dohren H."/>
            <person name="Doonan J."/>
            <person name="Driessen A.J."/>
            <person name="Durek P."/>
            <person name="Espeso E."/>
            <person name="Fekete E."/>
            <person name="Flipphi M."/>
            <person name="Estrada C.G."/>
            <person name="Geysens S."/>
            <person name="Goldman G."/>
            <person name="de Groot P.W."/>
            <person name="Hansen K."/>
            <person name="Harris S.D."/>
            <person name="Heinekamp T."/>
            <person name="Helmstaedt K."/>
            <person name="Henrissat B."/>
            <person name="Hofmann G."/>
            <person name="Homan T."/>
            <person name="Horio T."/>
            <person name="Horiuchi H."/>
            <person name="James S."/>
            <person name="Jones M."/>
            <person name="Karaffa L."/>
            <person name="Karanyi Z."/>
            <person name="Kato M."/>
            <person name="Keller N."/>
            <person name="Kelly D.E."/>
            <person name="Kiel J.A."/>
            <person name="Kim J.M."/>
            <person name="van der Klei I.J."/>
            <person name="Klis F.M."/>
            <person name="Kovalchuk A."/>
            <person name="Krasevec N."/>
            <person name="Kubicek C.P."/>
            <person name="Liu B."/>
            <person name="Maccabe A."/>
            <person name="Meyer V."/>
            <person name="Mirabito P."/>
            <person name="Miskei M."/>
            <person name="Mos M."/>
            <person name="Mullins J."/>
            <person name="Nelson D.R."/>
            <person name="Nielsen J."/>
            <person name="Oakley B.R."/>
            <person name="Osmani S.A."/>
            <person name="Pakula T."/>
            <person name="Paszewski A."/>
            <person name="Paulsen I."/>
            <person name="Pilsyk S."/>
            <person name="Pocsi I."/>
            <person name="Punt P.J."/>
            <person name="Ram A.F."/>
            <person name="Ren Q."/>
            <person name="Robellet X."/>
            <person name="Robson G."/>
            <person name="Seiboth B."/>
            <person name="van Solingen P."/>
            <person name="Specht T."/>
            <person name="Sun J."/>
            <person name="Taheri-Talesh N."/>
            <person name="Takeshita N."/>
            <person name="Ussery D."/>
            <person name="vanKuyk P.A."/>
            <person name="Visser H."/>
            <person name="van de Vondervoort P.J."/>
            <person name="de Vries R.P."/>
            <person name="Walton J."/>
            <person name="Xiang X."/>
            <person name="Xiong Y."/>
            <person name="Zeng A.P."/>
            <person name="Brandt B.W."/>
            <person name="Cornell M.J."/>
            <person name="van den Hondel C.A."/>
            <person name="Visser J."/>
            <person name="Oliver S.G."/>
            <person name="Turner G."/>
        </authorList>
    </citation>
    <scope>GENOME REANNOTATION</scope>
    <source>
        <strain>FGSC A4 / ATCC 38163 / CBS 112.46 / NRRL 194 / M139</strain>
    </source>
</reference>
<keyword id="KW-1185">Reference proteome</keyword>
<organism>
    <name type="scientific">Emericella nidulans (strain FGSC A4 / ATCC 38163 / CBS 112.46 / NRRL 194 / M139)</name>
    <name type="common">Aspergillus nidulans</name>
    <dbReference type="NCBI Taxonomy" id="227321"/>
    <lineage>
        <taxon>Eukaryota</taxon>
        <taxon>Fungi</taxon>
        <taxon>Dikarya</taxon>
        <taxon>Ascomycota</taxon>
        <taxon>Pezizomycotina</taxon>
        <taxon>Eurotiomycetes</taxon>
        <taxon>Eurotiomycetidae</taxon>
        <taxon>Eurotiales</taxon>
        <taxon>Aspergillaceae</taxon>
        <taxon>Aspergillus</taxon>
        <taxon>Aspergillus subgen. Nidulantes</taxon>
    </lineage>
</organism>